<name>PPO4_AGABI</name>
<keyword id="KW-0002">3D-structure</keyword>
<keyword id="KW-0186">Copper</keyword>
<keyword id="KW-0470">Melanin biosynthesis</keyword>
<keyword id="KW-0479">Metal-binding</keyword>
<keyword id="KW-0503">Monooxygenase</keyword>
<keyword id="KW-0560">Oxidoreductase</keyword>
<keyword id="KW-0883">Thioether bond</keyword>
<comment type="function">
    <text evidence="1">Copper-containing oxidase that catalyzes both the o-hydroxylation of monophenols and the subsequent oxidation of the resulting o-diphenols into reactive o-quinones, which evolve spontaneously to produce intermediates, which associate in dark brown pigments. Involved in the initial step of melanin synthesis. Melanins constitute a mechanism of defense and resistance to stress such as UV radiations, free radicals, gamma rays, dehydratation and extreme temperatures, and contribute to the fungal cell-wall resistance against hydrolytic enzymes in avoiding cellular lysis. Fungal pigments are also involved in the formation and stability of spores (By similarity).</text>
</comment>
<comment type="catalytic activity">
    <reaction>
        <text>2 L-dopa + O2 = 2 L-dopaquinone + 2 H2O</text>
        <dbReference type="Rhea" id="RHEA:34287"/>
        <dbReference type="ChEBI" id="CHEBI:15377"/>
        <dbReference type="ChEBI" id="CHEBI:15379"/>
        <dbReference type="ChEBI" id="CHEBI:57504"/>
        <dbReference type="ChEBI" id="CHEBI:57924"/>
        <dbReference type="EC" id="1.14.18.1"/>
    </reaction>
</comment>
<comment type="catalytic activity">
    <reaction>
        <text>L-tyrosine + O2 = L-dopaquinone + H2O</text>
        <dbReference type="Rhea" id="RHEA:18117"/>
        <dbReference type="ChEBI" id="CHEBI:15377"/>
        <dbReference type="ChEBI" id="CHEBI:15379"/>
        <dbReference type="ChEBI" id="CHEBI:57924"/>
        <dbReference type="ChEBI" id="CHEBI:58315"/>
        <dbReference type="EC" id="1.14.18.1"/>
    </reaction>
</comment>
<comment type="cofactor">
    <cofactor evidence="2">
        <name>Cu(2+)</name>
        <dbReference type="ChEBI" id="CHEBI:29036"/>
    </cofactor>
    <text evidence="2">Binds 2 copper ions per subunit.</text>
</comment>
<comment type="subunit">
    <text evidence="1">Heterotetramer.</text>
</comment>
<comment type="PTM">
    <text evidence="1">The C-ter is probably cleaved after Gly-379 since the mature active protein is smaller than the protein encoded by the gene.</text>
</comment>
<comment type="similarity">
    <text evidence="3">Belongs to the tyrosinase family.</text>
</comment>
<dbReference type="EC" id="1.14.18.1"/>
<dbReference type="EMBL" id="GQ354802">
    <property type="protein sequence ID" value="ACU29458.1"/>
    <property type="molecule type" value="mRNA"/>
</dbReference>
<dbReference type="EMBL" id="GU936493">
    <property type="protein sequence ID" value="ADE67052.1"/>
    <property type="molecule type" value="Genomic_DNA"/>
</dbReference>
<dbReference type="PDB" id="5M6B">
    <property type="method" value="X-ray"/>
    <property type="resolution" value="3.25 A"/>
    <property type="chains" value="A/B/C/D=1-565"/>
</dbReference>
<dbReference type="PDBsum" id="5M6B"/>
<dbReference type="SMR" id="C7FF05"/>
<dbReference type="BRENDA" id="1.14.18.1">
    <property type="organism ID" value="178"/>
</dbReference>
<dbReference type="GO" id="GO:0046872">
    <property type="term" value="F:metal ion binding"/>
    <property type="evidence" value="ECO:0007669"/>
    <property type="project" value="UniProtKB-KW"/>
</dbReference>
<dbReference type="GO" id="GO:0004503">
    <property type="term" value="F:tyrosinase activity"/>
    <property type="evidence" value="ECO:0007669"/>
    <property type="project" value="UniProtKB-EC"/>
</dbReference>
<dbReference type="GO" id="GO:0042438">
    <property type="term" value="P:melanin biosynthetic process"/>
    <property type="evidence" value="ECO:0007669"/>
    <property type="project" value="UniProtKB-KW"/>
</dbReference>
<dbReference type="Gene3D" id="2.60.310.20">
    <property type="match status" value="1"/>
</dbReference>
<dbReference type="Gene3D" id="1.10.1280.10">
    <property type="entry name" value="Di-copper center containing domain from catechol oxidase"/>
    <property type="match status" value="1"/>
</dbReference>
<dbReference type="InterPro" id="IPR008922">
    <property type="entry name" value="Di-copper_centre_dom_sf"/>
</dbReference>
<dbReference type="InterPro" id="IPR016216">
    <property type="entry name" value="Monophenol_mOase_fun"/>
</dbReference>
<dbReference type="InterPro" id="IPR050316">
    <property type="entry name" value="Tyrosinase/Hemocyanin"/>
</dbReference>
<dbReference type="InterPro" id="IPR041640">
    <property type="entry name" value="Tyrosinase_C"/>
</dbReference>
<dbReference type="InterPro" id="IPR002227">
    <property type="entry name" value="Tyrosinase_Cu-bd"/>
</dbReference>
<dbReference type="PANTHER" id="PTHR11474:SF76">
    <property type="entry name" value="SHKT DOMAIN-CONTAINING PROTEIN"/>
    <property type="match status" value="1"/>
</dbReference>
<dbReference type="PANTHER" id="PTHR11474">
    <property type="entry name" value="TYROSINASE FAMILY MEMBER"/>
    <property type="match status" value="1"/>
</dbReference>
<dbReference type="Pfam" id="PF00264">
    <property type="entry name" value="Tyrosinase"/>
    <property type="match status" value="1"/>
</dbReference>
<dbReference type="Pfam" id="PF18132">
    <property type="entry name" value="Tyrosinase_C"/>
    <property type="match status" value="1"/>
</dbReference>
<dbReference type="PIRSF" id="PIRSF000340">
    <property type="entry name" value="MPO_fungal"/>
    <property type="match status" value="1"/>
</dbReference>
<dbReference type="PRINTS" id="PR00092">
    <property type="entry name" value="TYROSINASE"/>
</dbReference>
<dbReference type="SUPFAM" id="SSF48056">
    <property type="entry name" value="Di-copper centre-containing domain"/>
    <property type="match status" value="1"/>
</dbReference>
<dbReference type="PROSITE" id="PS00497">
    <property type="entry name" value="TYROSINASE_1"/>
    <property type="match status" value="1"/>
</dbReference>
<dbReference type="PROSITE" id="PS00498">
    <property type="entry name" value="TYROSINASE_2"/>
    <property type="match status" value="1"/>
</dbReference>
<evidence type="ECO:0000250" key="1"/>
<evidence type="ECO:0000250" key="2">
    <source>
        <dbReference type="UniProtKB" id="Q9ZP19"/>
    </source>
</evidence>
<evidence type="ECO:0000305" key="3"/>
<evidence type="ECO:0007829" key="4">
    <source>
        <dbReference type="PDB" id="5M6B"/>
    </source>
</evidence>
<accession>C7FF05</accession>
<feature type="chain" id="PRO_0000416866" description="Polyphenol oxidase 4">
    <location>
        <begin position="1"/>
        <end position="379"/>
    </location>
</feature>
<feature type="propeptide" id="PRO_0000416867" description="Removed in mature form" evidence="3">
    <location>
        <begin position="380"/>
        <end position="611"/>
    </location>
</feature>
<feature type="binding site" evidence="2">
    <location>
        <position position="57"/>
    </location>
    <ligand>
        <name>Cu cation</name>
        <dbReference type="ChEBI" id="CHEBI:23378"/>
        <label>A</label>
    </ligand>
</feature>
<feature type="binding site" evidence="2">
    <location>
        <position position="82"/>
    </location>
    <ligand>
        <name>Cu cation</name>
        <dbReference type="ChEBI" id="CHEBI:23378"/>
        <label>A</label>
    </ligand>
</feature>
<feature type="binding site" evidence="2">
    <location>
        <position position="91"/>
    </location>
    <ligand>
        <name>Cu cation</name>
        <dbReference type="ChEBI" id="CHEBI:23378"/>
        <label>A</label>
    </ligand>
</feature>
<feature type="binding site" evidence="2">
    <location>
        <position position="251"/>
    </location>
    <ligand>
        <name>Cu cation</name>
        <dbReference type="ChEBI" id="CHEBI:23378"/>
        <label>B</label>
    </ligand>
</feature>
<feature type="binding site" evidence="2">
    <location>
        <position position="255"/>
    </location>
    <ligand>
        <name>Cu cation</name>
        <dbReference type="ChEBI" id="CHEBI:23378"/>
        <label>B</label>
    </ligand>
</feature>
<feature type="binding site" evidence="1">
    <location>
        <position position="255"/>
    </location>
    <ligand>
        <name>substrate</name>
    </ligand>
</feature>
<feature type="binding site" evidence="2">
    <location>
        <position position="283"/>
    </location>
    <ligand>
        <name>Cu cation</name>
        <dbReference type="ChEBI" id="CHEBI:23378"/>
        <label>B</label>
    </ligand>
</feature>
<feature type="site" description="Cleavage" evidence="3">
    <location>
        <begin position="379"/>
        <end position="380"/>
    </location>
</feature>
<feature type="cross-link" description="2'-(S-cysteinyl)-histidine (Cys-His)" evidence="1">
    <location>
        <begin position="80"/>
        <end position="82"/>
    </location>
</feature>
<feature type="strand" evidence="4">
    <location>
        <begin position="10"/>
        <end position="12"/>
    </location>
</feature>
<feature type="helix" evidence="4">
    <location>
        <begin position="19"/>
        <end position="22"/>
    </location>
</feature>
<feature type="helix" evidence="4">
    <location>
        <begin position="26"/>
        <end position="41"/>
    </location>
</feature>
<feature type="helix" evidence="4">
    <location>
        <begin position="50"/>
        <end position="57"/>
    </location>
</feature>
<feature type="strand" evidence="4">
    <location>
        <begin position="58"/>
        <end position="60"/>
    </location>
</feature>
<feature type="helix" evidence="4">
    <location>
        <begin position="87"/>
        <end position="110"/>
    </location>
</feature>
<feature type="turn" evidence="4">
    <location>
        <begin position="115"/>
        <end position="118"/>
    </location>
</feature>
<feature type="helix" evidence="4">
    <location>
        <begin position="119"/>
        <end position="125"/>
    </location>
</feature>
<feature type="turn" evidence="4">
    <location>
        <begin position="134"/>
        <end position="136"/>
    </location>
</feature>
<feature type="turn" evidence="4">
    <location>
        <begin position="142"/>
        <end position="146"/>
    </location>
</feature>
<feature type="strand" evidence="4">
    <location>
        <begin position="148"/>
        <end position="153"/>
    </location>
</feature>
<feature type="strand" evidence="4">
    <location>
        <begin position="159"/>
        <end position="163"/>
    </location>
</feature>
<feature type="strand" evidence="4">
    <location>
        <begin position="165"/>
        <end position="167"/>
    </location>
</feature>
<feature type="helix" evidence="4">
    <location>
        <begin position="176"/>
        <end position="178"/>
    </location>
</feature>
<feature type="strand" evidence="4">
    <location>
        <begin position="179"/>
        <end position="181"/>
    </location>
</feature>
<feature type="turn" evidence="4">
    <location>
        <begin position="182"/>
        <end position="186"/>
    </location>
</feature>
<feature type="strand" evidence="4">
    <location>
        <begin position="192"/>
        <end position="194"/>
    </location>
</feature>
<feature type="helix" evidence="4">
    <location>
        <begin position="202"/>
        <end position="225"/>
    </location>
</feature>
<feature type="helix" evidence="4">
    <location>
        <begin position="231"/>
        <end position="234"/>
    </location>
</feature>
<feature type="helix" evidence="4">
    <location>
        <begin position="247"/>
        <end position="259"/>
    </location>
</feature>
<feature type="strand" evidence="4">
    <location>
        <begin position="260"/>
        <end position="264"/>
    </location>
</feature>
<feature type="turn" evidence="4">
    <location>
        <begin position="270"/>
        <end position="272"/>
    </location>
</feature>
<feature type="helix" evidence="4">
    <location>
        <begin position="273"/>
        <end position="275"/>
    </location>
</feature>
<feature type="helix" evidence="4">
    <location>
        <begin position="279"/>
        <end position="296"/>
    </location>
</feature>
<feature type="strand" evidence="4">
    <location>
        <begin position="312"/>
        <end position="314"/>
    </location>
</feature>
<feature type="strand" evidence="4">
    <location>
        <begin position="330"/>
        <end position="332"/>
    </location>
</feature>
<feature type="helix" evidence="4">
    <location>
        <begin position="341"/>
        <end position="343"/>
    </location>
</feature>
<feature type="helix" evidence="4">
    <location>
        <begin position="345"/>
        <end position="348"/>
    </location>
</feature>
<feature type="helix" evidence="4">
    <location>
        <begin position="353"/>
        <end position="355"/>
    </location>
</feature>
<feature type="turn" evidence="4">
    <location>
        <begin position="357"/>
        <end position="360"/>
    </location>
</feature>
<feature type="helix" evidence="4">
    <location>
        <begin position="363"/>
        <end position="377"/>
    </location>
</feature>
<feature type="helix" evidence="4">
    <location>
        <begin position="389"/>
        <end position="397"/>
    </location>
</feature>
<feature type="strand" evidence="4">
    <location>
        <begin position="408"/>
        <end position="420"/>
    </location>
</feature>
<feature type="strand" evidence="4">
    <location>
        <begin position="423"/>
        <end position="426"/>
    </location>
</feature>
<feature type="strand" evidence="4">
    <location>
        <begin position="428"/>
        <end position="434"/>
    </location>
</feature>
<feature type="strand" evidence="4">
    <location>
        <begin position="439"/>
        <end position="441"/>
    </location>
</feature>
<feature type="strand" evidence="4">
    <location>
        <begin position="447"/>
        <end position="452"/>
    </location>
</feature>
<feature type="strand" evidence="4">
    <location>
        <begin position="472"/>
        <end position="478"/>
    </location>
</feature>
<feature type="helix" evidence="4">
    <location>
        <begin position="480"/>
        <end position="486"/>
    </location>
</feature>
<feature type="helix" evidence="4">
    <location>
        <begin position="492"/>
        <end position="501"/>
    </location>
</feature>
<feature type="strand" evidence="4">
    <location>
        <begin position="504"/>
        <end position="514"/>
    </location>
</feature>
<feature type="strand" evidence="4">
    <location>
        <begin position="521"/>
        <end position="531"/>
    </location>
</feature>
<feature type="strand" evidence="4">
    <location>
        <begin position="542"/>
        <end position="544"/>
    </location>
</feature>
<feature type="strand" evidence="4">
    <location>
        <begin position="547"/>
        <end position="549"/>
    </location>
</feature>
<organism>
    <name type="scientific">Agaricus bisporus</name>
    <name type="common">White button mushroom</name>
    <dbReference type="NCBI Taxonomy" id="5341"/>
    <lineage>
        <taxon>Eukaryota</taxon>
        <taxon>Fungi</taxon>
        <taxon>Dikarya</taxon>
        <taxon>Basidiomycota</taxon>
        <taxon>Agaricomycotina</taxon>
        <taxon>Agaricomycetes</taxon>
        <taxon>Agaricomycetidae</taxon>
        <taxon>Agaricales</taxon>
        <taxon>Agaricineae</taxon>
        <taxon>Agaricaceae</taxon>
        <taxon>Agaricus</taxon>
    </lineage>
</organism>
<proteinExistence type="evidence at protein level"/>
<gene>
    <name type="primary">PPO4</name>
</gene>
<reference key="1">
    <citation type="journal article" date="2010" name="Biotechnol. Lett.">
        <title>Cloning, characterization and expression of two new polyphenol oxidase cDNAs from Agaricus bisporus.</title>
        <authorList>
            <person name="Wu J."/>
            <person name="Chen H."/>
            <person name="Gao J."/>
            <person name="Liu X."/>
            <person name="Cheng W."/>
            <person name="Ma X."/>
        </authorList>
    </citation>
    <scope>NUCLEOTIDE SEQUENCE [MRNA]</scope>
</reference>
<reference key="2">
    <citation type="submission" date="2010-02" db="EMBL/GenBank/DDBJ databases">
        <title>Molecular cloning and characterization of two polyphenoloxidase genes from the mushrooms Agaricus bisporus.</title>
        <authorList>
            <person name="Li N.Y."/>
            <person name="Cai W.M."/>
            <person name="Liu C.Y."/>
            <person name="Ran F.L."/>
        </authorList>
    </citation>
    <scope>NUCLEOTIDE SEQUENCE [GENOMIC DNA]</scope>
    <source>
        <strain>As2796</strain>
    </source>
</reference>
<sequence length="611" mass="68318">MSLLATVGPTGGVKNRLDIVDFVRDEKFFTLYVRALQAIQDKDQADYSSFFQLSGIHGLPFTPWAKPKDTPTVPYESGYCTHSQVLFPTWHRVYVSIYEQVLQEAAKGIAKKFTVHKKEWVQAAEDLRQPYWDTGFALVPPDEIIKLEQVKITNYDGTKITVRNPILRYSFHPIDPSFSGYPNFDTWRTTVRNPDADKKENIPALIAKLDLEADSTREKTYNMLKFNANWEAFSNHGEFDDTHANSLEAVHDDIHGFVGRGAIRGHMTHALFAAFDPIFWLHHSNVDRHLSLWQALYPGVWVTQGPEREGSMGFAPGTELNKDSALEPFYETEDKPWTSVPLTDTALLNYSYPDFDKVKGGTPDLVRDYINDHIDRRYGIKKSEGGKNPALDLLSDFKGVTHDHNEDLKMFDWTIQASWKKFELDDSFAIIFYFAADGSTNVTKENYIGSINIFRGTTPTNCANCRTQDNLVQEGFVHLDRFIARDLDTFDPQAVHRYLKEKKLSYKVVADDHSVTLKSLRIRVQGRPLHLPPGVSFPRLDKNIPIVNFDDVLDLVTGVVNIGLTAVGATAGVAIGVVGATAGTAIGVAGAATDAVTNIAKGGLGALGRIF</sequence>
<protein>
    <recommendedName>
        <fullName>Polyphenol oxidase 4</fullName>
        <shortName>PPO4</shortName>
        <shortName>Phenolase 4</shortName>
        <ecNumber>1.14.18.1</ecNumber>
    </recommendedName>
    <alternativeName>
        <fullName>Cresolase</fullName>
    </alternativeName>
    <alternativeName>
        <fullName>Tyrosinase 4</fullName>
    </alternativeName>
</protein>